<evidence type="ECO:0000250" key="1">
    <source>
        <dbReference type="UniProtKB" id="P02743"/>
    </source>
</evidence>
<evidence type="ECO:0000255" key="2"/>
<evidence type="ECO:0000255" key="3">
    <source>
        <dbReference type="PROSITE-ProRule" id="PRU01172"/>
    </source>
</evidence>
<evidence type="ECO:0000269" key="4">
    <source>
    </source>
</evidence>
<evidence type="ECO:0000303" key="5">
    <source>
    </source>
</evidence>
<evidence type="ECO:0000305" key="6"/>
<comment type="cofactor">
    <cofactor evidence="1 4">
        <name>Ca(2+)</name>
        <dbReference type="ChEBI" id="CHEBI:29108"/>
    </cofactor>
    <text evidence="1 4">Binds 2 calcium ions per subunit.</text>
</comment>
<comment type="subunit">
    <text evidence="1 4">Homopentamer. Pentraxin (or pentaxin) have a discoid arrangement of 5 non-covalently bound subunits.</text>
</comment>
<comment type="subcellular location">
    <subcellularLocation>
        <location evidence="4">Secreted</location>
    </subcellularLocation>
</comment>
<comment type="similarity">
    <text evidence="2">Belongs to the pentraxin family.</text>
</comment>
<keyword id="KW-0034">Amyloid</keyword>
<keyword id="KW-0106">Calcium</keyword>
<keyword id="KW-0903">Direct protein sequencing</keyword>
<keyword id="KW-0430">Lectin</keyword>
<keyword id="KW-0479">Metal-binding</keyword>
<keyword id="KW-0964">Secreted</keyword>
<dbReference type="GO" id="GO:0005576">
    <property type="term" value="C:extracellular region"/>
    <property type="evidence" value="ECO:0007669"/>
    <property type="project" value="UniProtKB-SubCell"/>
</dbReference>
<dbReference type="GO" id="GO:0030246">
    <property type="term" value="F:carbohydrate binding"/>
    <property type="evidence" value="ECO:0007669"/>
    <property type="project" value="UniProtKB-KW"/>
</dbReference>
<dbReference type="GO" id="GO:0046872">
    <property type="term" value="F:metal ion binding"/>
    <property type="evidence" value="ECO:0007669"/>
    <property type="project" value="UniProtKB-KW"/>
</dbReference>
<dbReference type="InterPro" id="IPR001759">
    <property type="entry name" value="Pentraxin-related"/>
</dbReference>
<dbReference type="PROSITE" id="PS51828">
    <property type="entry name" value="PTX_2"/>
    <property type="match status" value="1"/>
</dbReference>
<reference evidence="6" key="1">
    <citation type="journal article" date="1998" name="Dev. Comp. Immunol.">
        <title>A comparative study of pentraxin-like proteins in different fish species.</title>
        <authorList>
            <person name="Lund V."/>
            <person name="Olafsen J.A."/>
        </authorList>
    </citation>
    <scope>PROTEIN SEQUENCE</scope>
    <scope>COFACTOR</scope>
    <scope>SUBUNIT</scope>
    <scope>SUBCELLULAR LOCATION</scope>
    <source>
        <tissue evidence="4">Serum</tissue>
    </source>
</reference>
<protein>
    <recommendedName>
        <fullName evidence="1">Serum amyloid P-component</fullName>
    </recommendedName>
    <alternativeName>
        <fullName evidence="5">Agarose-binding protein</fullName>
        <shortName evidence="5">Hh-ABP</shortName>
    </alternativeName>
</protein>
<sequence>EPIDLLGKVFVFSKESNVDDVKLLTPQTE</sequence>
<name>SAMP_HIPHI</name>
<proteinExistence type="evidence at protein level"/>
<accession>P86695</accession>
<organism>
    <name type="scientific">Hippoglossus hippoglossus</name>
    <name type="common">Atlantic halibut</name>
    <name type="synonym">Pleuronectes hippoglossus</name>
    <dbReference type="NCBI Taxonomy" id="8267"/>
    <lineage>
        <taxon>Eukaryota</taxon>
        <taxon>Metazoa</taxon>
        <taxon>Chordata</taxon>
        <taxon>Craniata</taxon>
        <taxon>Vertebrata</taxon>
        <taxon>Euteleostomi</taxon>
        <taxon>Actinopterygii</taxon>
        <taxon>Neopterygii</taxon>
        <taxon>Teleostei</taxon>
        <taxon>Neoteleostei</taxon>
        <taxon>Acanthomorphata</taxon>
        <taxon>Carangaria</taxon>
        <taxon>Pleuronectiformes</taxon>
        <taxon>Pleuronectoidei</taxon>
        <taxon>Pleuronectidae</taxon>
        <taxon>Hippoglossus</taxon>
    </lineage>
</organism>
<feature type="chain" id="PRO_0000397213" description="Serum amyloid P-component">
    <location>
        <begin position="1"/>
        <end position="29" status="greater than"/>
    </location>
</feature>
<feature type="domain" description="Pentraxin (PTX)" evidence="3">
    <location>
        <begin position="6"/>
        <end position="29" status="greater than"/>
    </location>
</feature>
<feature type="unsure residue" evidence="4">
    <location>
        <position position="1"/>
    </location>
</feature>
<feature type="unsure residue" evidence="4">
    <location>
        <position position="19"/>
    </location>
</feature>
<feature type="non-terminal residue" evidence="5">
    <location>
        <position position="29"/>
    </location>
</feature>